<organism>
    <name type="scientific">Tolumonas auensis (strain DSM 9187 / NBRC 110442 / TA 4)</name>
    <dbReference type="NCBI Taxonomy" id="595494"/>
    <lineage>
        <taxon>Bacteria</taxon>
        <taxon>Pseudomonadati</taxon>
        <taxon>Pseudomonadota</taxon>
        <taxon>Gammaproteobacteria</taxon>
        <taxon>Aeromonadales</taxon>
        <taxon>Aeromonadaceae</taxon>
        <taxon>Tolumonas</taxon>
    </lineage>
</organism>
<protein>
    <recommendedName>
        <fullName evidence="1">Protein translocase subunit SecA</fullName>
        <ecNumber evidence="1">7.4.2.8</ecNumber>
    </recommendedName>
</protein>
<evidence type="ECO:0000255" key="1">
    <source>
        <dbReference type="HAMAP-Rule" id="MF_01382"/>
    </source>
</evidence>
<feature type="chain" id="PRO_1000215121" description="Protein translocase subunit SecA">
    <location>
        <begin position="1"/>
        <end position="907"/>
    </location>
</feature>
<feature type="binding site" evidence="1">
    <location>
        <position position="87"/>
    </location>
    <ligand>
        <name>ATP</name>
        <dbReference type="ChEBI" id="CHEBI:30616"/>
    </ligand>
</feature>
<feature type="binding site" evidence="1">
    <location>
        <begin position="105"/>
        <end position="109"/>
    </location>
    <ligand>
        <name>ATP</name>
        <dbReference type="ChEBI" id="CHEBI:30616"/>
    </ligand>
</feature>
<feature type="binding site" evidence="1">
    <location>
        <position position="512"/>
    </location>
    <ligand>
        <name>ATP</name>
        <dbReference type="ChEBI" id="CHEBI:30616"/>
    </ligand>
</feature>
<feature type="binding site" evidence="1">
    <location>
        <position position="891"/>
    </location>
    <ligand>
        <name>Zn(2+)</name>
        <dbReference type="ChEBI" id="CHEBI:29105"/>
    </ligand>
</feature>
<feature type="binding site" evidence="1">
    <location>
        <position position="893"/>
    </location>
    <ligand>
        <name>Zn(2+)</name>
        <dbReference type="ChEBI" id="CHEBI:29105"/>
    </ligand>
</feature>
<feature type="binding site" evidence="1">
    <location>
        <position position="902"/>
    </location>
    <ligand>
        <name>Zn(2+)</name>
        <dbReference type="ChEBI" id="CHEBI:29105"/>
    </ligand>
</feature>
<feature type="binding site" evidence="1">
    <location>
        <position position="903"/>
    </location>
    <ligand>
        <name>Zn(2+)</name>
        <dbReference type="ChEBI" id="CHEBI:29105"/>
    </ligand>
</feature>
<dbReference type="EC" id="7.4.2.8" evidence="1"/>
<dbReference type="EMBL" id="CP001616">
    <property type="protein sequence ID" value="ACQ92161.1"/>
    <property type="molecule type" value="Genomic_DNA"/>
</dbReference>
<dbReference type="RefSeq" id="WP_012728760.1">
    <property type="nucleotide sequence ID" value="NC_012691.1"/>
</dbReference>
<dbReference type="SMR" id="C4LA32"/>
<dbReference type="STRING" id="595494.Tola_0532"/>
<dbReference type="KEGG" id="tau:Tola_0532"/>
<dbReference type="eggNOG" id="COG0653">
    <property type="taxonomic scope" value="Bacteria"/>
</dbReference>
<dbReference type="HOGENOM" id="CLU_005314_3_0_6"/>
<dbReference type="OrthoDB" id="9805579at2"/>
<dbReference type="Proteomes" id="UP000009073">
    <property type="component" value="Chromosome"/>
</dbReference>
<dbReference type="GO" id="GO:0031522">
    <property type="term" value="C:cell envelope Sec protein transport complex"/>
    <property type="evidence" value="ECO:0007669"/>
    <property type="project" value="TreeGrafter"/>
</dbReference>
<dbReference type="GO" id="GO:0005829">
    <property type="term" value="C:cytosol"/>
    <property type="evidence" value="ECO:0007669"/>
    <property type="project" value="TreeGrafter"/>
</dbReference>
<dbReference type="GO" id="GO:0005886">
    <property type="term" value="C:plasma membrane"/>
    <property type="evidence" value="ECO:0007669"/>
    <property type="project" value="UniProtKB-SubCell"/>
</dbReference>
<dbReference type="GO" id="GO:0005524">
    <property type="term" value="F:ATP binding"/>
    <property type="evidence" value="ECO:0007669"/>
    <property type="project" value="UniProtKB-UniRule"/>
</dbReference>
<dbReference type="GO" id="GO:0046872">
    <property type="term" value="F:metal ion binding"/>
    <property type="evidence" value="ECO:0007669"/>
    <property type="project" value="UniProtKB-KW"/>
</dbReference>
<dbReference type="GO" id="GO:0008564">
    <property type="term" value="F:protein-exporting ATPase activity"/>
    <property type="evidence" value="ECO:0007669"/>
    <property type="project" value="UniProtKB-EC"/>
</dbReference>
<dbReference type="GO" id="GO:0065002">
    <property type="term" value="P:intracellular protein transmembrane transport"/>
    <property type="evidence" value="ECO:0007669"/>
    <property type="project" value="UniProtKB-UniRule"/>
</dbReference>
<dbReference type="GO" id="GO:0017038">
    <property type="term" value="P:protein import"/>
    <property type="evidence" value="ECO:0007669"/>
    <property type="project" value="InterPro"/>
</dbReference>
<dbReference type="GO" id="GO:0006605">
    <property type="term" value="P:protein targeting"/>
    <property type="evidence" value="ECO:0007669"/>
    <property type="project" value="UniProtKB-UniRule"/>
</dbReference>
<dbReference type="GO" id="GO:0043952">
    <property type="term" value="P:protein transport by the Sec complex"/>
    <property type="evidence" value="ECO:0007669"/>
    <property type="project" value="TreeGrafter"/>
</dbReference>
<dbReference type="CDD" id="cd17928">
    <property type="entry name" value="DEXDc_SecA"/>
    <property type="match status" value="1"/>
</dbReference>
<dbReference type="CDD" id="cd18803">
    <property type="entry name" value="SF2_C_secA"/>
    <property type="match status" value="1"/>
</dbReference>
<dbReference type="FunFam" id="3.40.50.300:FF:000113">
    <property type="entry name" value="Preprotein translocase subunit SecA"/>
    <property type="match status" value="1"/>
</dbReference>
<dbReference type="FunFam" id="3.90.1440.10:FF:000001">
    <property type="entry name" value="Preprotein translocase subunit SecA"/>
    <property type="match status" value="1"/>
</dbReference>
<dbReference type="FunFam" id="1.10.3060.10:FF:000003">
    <property type="entry name" value="Protein translocase subunit SecA"/>
    <property type="match status" value="1"/>
</dbReference>
<dbReference type="Gene3D" id="1.10.3060.10">
    <property type="entry name" value="Helical scaffold and wing domains of SecA"/>
    <property type="match status" value="1"/>
</dbReference>
<dbReference type="Gene3D" id="3.40.50.300">
    <property type="entry name" value="P-loop containing nucleotide triphosphate hydrolases"/>
    <property type="match status" value="2"/>
</dbReference>
<dbReference type="Gene3D" id="3.90.1440.10">
    <property type="entry name" value="SecA, preprotein cross-linking domain"/>
    <property type="match status" value="1"/>
</dbReference>
<dbReference type="HAMAP" id="MF_01382">
    <property type="entry name" value="SecA"/>
    <property type="match status" value="1"/>
</dbReference>
<dbReference type="InterPro" id="IPR014001">
    <property type="entry name" value="Helicase_ATP-bd"/>
</dbReference>
<dbReference type="InterPro" id="IPR027417">
    <property type="entry name" value="P-loop_NTPase"/>
</dbReference>
<dbReference type="InterPro" id="IPR004027">
    <property type="entry name" value="SEC_C_motif"/>
</dbReference>
<dbReference type="InterPro" id="IPR000185">
    <property type="entry name" value="SecA"/>
</dbReference>
<dbReference type="InterPro" id="IPR020937">
    <property type="entry name" value="SecA_CS"/>
</dbReference>
<dbReference type="InterPro" id="IPR011115">
    <property type="entry name" value="SecA_DEAD"/>
</dbReference>
<dbReference type="InterPro" id="IPR014018">
    <property type="entry name" value="SecA_motor_DEAD"/>
</dbReference>
<dbReference type="InterPro" id="IPR011130">
    <property type="entry name" value="SecA_preprotein_X-link_dom"/>
</dbReference>
<dbReference type="InterPro" id="IPR044722">
    <property type="entry name" value="SecA_SF2_C"/>
</dbReference>
<dbReference type="InterPro" id="IPR011116">
    <property type="entry name" value="SecA_Wing/Scaffold"/>
</dbReference>
<dbReference type="InterPro" id="IPR036266">
    <property type="entry name" value="SecA_Wing/Scaffold_sf"/>
</dbReference>
<dbReference type="InterPro" id="IPR036670">
    <property type="entry name" value="SecA_X-link_sf"/>
</dbReference>
<dbReference type="NCBIfam" id="NF009538">
    <property type="entry name" value="PRK12904.1"/>
    <property type="match status" value="1"/>
</dbReference>
<dbReference type="NCBIfam" id="TIGR00963">
    <property type="entry name" value="secA"/>
    <property type="match status" value="1"/>
</dbReference>
<dbReference type="PANTHER" id="PTHR30612:SF0">
    <property type="entry name" value="CHLOROPLAST PROTEIN-TRANSPORTING ATPASE"/>
    <property type="match status" value="1"/>
</dbReference>
<dbReference type="PANTHER" id="PTHR30612">
    <property type="entry name" value="SECA INNER MEMBRANE COMPONENT OF SEC PROTEIN SECRETION SYSTEM"/>
    <property type="match status" value="1"/>
</dbReference>
<dbReference type="Pfam" id="PF21090">
    <property type="entry name" value="P-loop_SecA"/>
    <property type="match status" value="1"/>
</dbReference>
<dbReference type="Pfam" id="PF02810">
    <property type="entry name" value="SEC-C"/>
    <property type="match status" value="1"/>
</dbReference>
<dbReference type="Pfam" id="PF07517">
    <property type="entry name" value="SecA_DEAD"/>
    <property type="match status" value="1"/>
</dbReference>
<dbReference type="Pfam" id="PF01043">
    <property type="entry name" value="SecA_PP_bind"/>
    <property type="match status" value="1"/>
</dbReference>
<dbReference type="Pfam" id="PF07516">
    <property type="entry name" value="SecA_SW"/>
    <property type="match status" value="1"/>
</dbReference>
<dbReference type="PRINTS" id="PR00906">
    <property type="entry name" value="SECA"/>
</dbReference>
<dbReference type="SMART" id="SM00957">
    <property type="entry name" value="SecA_DEAD"/>
    <property type="match status" value="1"/>
</dbReference>
<dbReference type="SMART" id="SM00958">
    <property type="entry name" value="SecA_PP_bind"/>
    <property type="match status" value="1"/>
</dbReference>
<dbReference type="SUPFAM" id="SSF81886">
    <property type="entry name" value="Helical scaffold and wing domains of SecA"/>
    <property type="match status" value="1"/>
</dbReference>
<dbReference type="SUPFAM" id="SSF52540">
    <property type="entry name" value="P-loop containing nucleoside triphosphate hydrolases"/>
    <property type="match status" value="2"/>
</dbReference>
<dbReference type="SUPFAM" id="SSF81767">
    <property type="entry name" value="Pre-protein crosslinking domain of SecA"/>
    <property type="match status" value="1"/>
</dbReference>
<dbReference type="PROSITE" id="PS01312">
    <property type="entry name" value="SECA"/>
    <property type="match status" value="1"/>
</dbReference>
<dbReference type="PROSITE" id="PS51196">
    <property type="entry name" value="SECA_MOTOR_DEAD"/>
    <property type="match status" value="1"/>
</dbReference>
<reference key="1">
    <citation type="submission" date="2009-05" db="EMBL/GenBank/DDBJ databases">
        <title>Complete sequence of Tolumonas auensis DSM 9187.</title>
        <authorList>
            <consortium name="US DOE Joint Genome Institute"/>
            <person name="Lucas S."/>
            <person name="Copeland A."/>
            <person name="Lapidus A."/>
            <person name="Glavina del Rio T."/>
            <person name="Tice H."/>
            <person name="Bruce D."/>
            <person name="Goodwin L."/>
            <person name="Pitluck S."/>
            <person name="Chertkov O."/>
            <person name="Brettin T."/>
            <person name="Detter J.C."/>
            <person name="Han C."/>
            <person name="Larimer F."/>
            <person name="Land M."/>
            <person name="Hauser L."/>
            <person name="Kyrpides N."/>
            <person name="Mikhailova N."/>
            <person name="Spring S."/>
            <person name="Beller H."/>
        </authorList>
    </citation>
    <scope>NUCLEOTIDE SEQUENCE [LARGE SCALE GENOMIC DNA]</scope>
    <source>
        <strain>DSM 9187 / NBRC 110442 / TA 4</strain>
    </source>
</reference>
<name>SECA_TOLAT</name>
<gene>
    <name evidence="1" type="primary">secA</name>
    <name type="ordered locus">Tola_0532</name>
</gene>
<proteinExistence type="inferred from homology"/>
<accession>C4LA32</accession>
<comment type="function">
    <text evidence="1">Part of the Sec protein translocase complex. Interacts with the SecYEG preprotein conducting channel. Has a central role in coupling the hydrolysis of ATP to the transfer of proteins into and across the cell membrane, serving both as a receptor for the preprotein-SecB complex and as an ATP-driven molecular motor driving the stepwise translocation of polypeptide chains across the membrane.</text>
</comment>
<comment type="catalytic activity">
    <reaction evidence="1">
        <text>ATP + H2O + cellular proteinSide 1 = ADP + phosphate + cellular proteinSide 2.</text>
        <dbReference type="EC" id="7.4.2.8"/>
    </reaction>
</comment>
<comment type="cofactor">
    <cofactor evidence="1">
        <name>Zn(2+)</name>
        <dbReference type="ChEBI" id="CHEBI:29105"/>
    </cofactor>
    <text evidence="1">May bind 1 zinc ion per subunit.</text>
</comment>
<comment type="subunit">
    <text evidence="1">Monomer and homodimer. Part of the essential Sec protein translocation apparatus which comprises SecA, SecYEG and auxiliary proteins SecDF-YajC and YidC.</text>
</comment>
<comment type="subcellular location">
    <subcellularLocation>
        <location evidence="1">Cell inner membrane</location>
        <topology evidence="1">Peripheral membrane protein</topology>
        <orientation evidence="1">Cytoplasmic side</orientation>
    </subcellularLocation>
    <subcellularLocation>
        <location evidence="1">Cytoplasm</location>
    </subcellularLocation>
    <text evidence="1">Distribution is 50-50.</text>
</comment>
<comment type="similarity">
    <text evidence="1">Belongs to the SecA family.</text>
</comment>
<keyword id="KW-0067">ATP-binding</keyword>
<keyword id="KW-0997">Cell inner membrane</keyword>
<keyword id="KW-1003">Cell membrane</keyword>
<keyword id="KW-0963">Cytoplasm</keyword>
<keyword id="KW-0472">Membrane</keyword>
<keyword id="KW-0479">Metal-binding</keyword>
<keyword id="KW-0547">Nucleotide-binding</keyword>
<keyword id="KW-0653">Protein transport</keyword>
<keyword id="KW-1185">Reference proteome</keyword>
<keyword id="KW-1278">Translocase</keyword>
<keyword id="KW-0811">Translocation</keyword>
<keyword id="KW-0813">Transport</keyword>
<keyword id="KW-0862">Zinc</keyword>
<sequence length="907" mass="102783">MITKLFTKIIGSRNDRTVKALKKIVKQINELEPQFASLADVDLQAKTVEFRQRLEKGEELDSLLPEAFATVREASKRVFAMRHFDVQMMGGIVLNNNQIAEMKTGEGKTLTATLPAYLNALTGQGVHIVTVNDYLARRDAEWSRPLFAFLGMTVGCNLSGMSHEEKQAAYACDITYGTNNEFGFDYLRDNMAFAAEQRVQRPLYYALVDEVDSVLIDEARTPLIISGAAEDSSELYIKINTLVPLLQKQDKEDSEEYQGNGHYTVDEKARQAYLTENGQIFVEGWLKQQGLMGEDDSLFSVANITLLHHVNAALRANTLFERDVDYIVKDDEVIIVDEHTGRTMAGRRWSEGLHQAIEAKEGAKIRNENQTLASITFQNYFRLYEKLAGMTGTADTEAYEFQQIYGLETVVLPTNRPMIRDDMGDLVYLTEQEKYDAIIEDIKIRVAEQRPVLVGTISIENSELLSNILTKEGIEHKVLNAKFHAQEAQIVAQAGRPSAVTIATNMAGRGTDIVLGGSWQAEIDALENPTAEQIATIKSEWQVRHDAVITSGGLHIIGTERHESRRIDNQLRGRSGRQGDPGSSRFYLSMEDSLMRIFASDRVSGMMKKLGMEHGEAIEHPWVSKAIENAQRKVEGRNFDIRKNLLEFDDVANDQRKVVYEQRNELLESADISETIKLIRTDVLDRVIDQYIAPHSLDESWDIAGLELRLRTDFAIDLPIAQWIKEDDKLYEEKIRERIISEIEASYAHKEELAGHDVLRQFEKSVMLQTLDNLWKEHLAAMDHLRQGIHLRGYAQKNPKQEYKREAFELFTQMLEALKQQVVSVLCRIQVQEPDVDAIEEQRRQSDSAQVRTYSHEEINALAEDEAESVDGQAVEPFVRDGAKIGRNDPCPCGSGKKYKHCHGKLD</sequence>